<keyword id="KW-0025">Alternative splicing</keyword>
<keyword id="KW-0256">Endoplasmic reticulum</keyword>
<keyword id="KW-0333">Golgi apparatus</keyword>
<keyword id="KW-0378">Hydrolase</keyword>
<keyword id="KW-0472">Membrane</keyword>
<keyword id="KW-1185">Reference proteome</keyword>
<keyword id="KW-0812">Transmembrane</keyword>
<keyword id="KW-1133">Transmembrane helix</keyword>
<feature type="chain" id="PRO_0000411669" description="Probable isoprenylcysteine alpha-carbonyl methylesterase ICMEL1">
    <location>
        <begin position="1"/>
        <end position="476"/>
    </location>
</feature>
<feature type="transmembrane region" description="Helical" evidence="2">
    <location>
        <begin position="153"/>
        <end position="173"/>
    </location>
</feature>
<feature type="transmembrane region" description="Helical" evidence="2">
    <location>
        <begin position="208"/>
        <end position="228"/>
    </location>
</feature>
<feature type="region of interest" description="Disordered" evidence="3">
    <location>
        <begin position="92"/>
        <end position="116"/>
    </location>
</feature>
<feature type="compositionally biased region" description="Polar residues" evidence="3">
    <location>
        <begin position="92"/>
        <end position="104"/>
    </location>
</feature>
<feature type="active site" evidence="7">
    <location>
        <position position="286"/>
    </location>
</feature>
<feature type="active site" evidence="7">
    <location>
        <position position="388"/>
    </location>
</feature>
<feature type="active site" evidence="7">
    <location>
        <position position="420"/>
    </location>
</feature>
<feature type="binding site" evidence="2">
    <location>
        <begin position="214"/>
        <end position="216"/>
    </location>
    <ligand>
        <name>substrate</name>
    </ligand>
</feature>
<feature type="binding site" evidence="2">
    <location>
        <begin position="285"/>
        <end position="287"/>
    </location>
    <ligand>
        <name>substrate</name>
    </ligand>
</feature>
<feature type="splice variant" id="VSP_041624" description="In isoform 2." evidence="5">
    <location>
        <begin position="327"/>
        <end position="476"/>
    </location>
</feature>
<organism>
    <name type="scientific">Arabidopsis thaliana</name>
    <name type="common">Mouse-ear cress</name>
    <dbReference type="NCBI Taxonomy" id="3702"/>
    <lineage>
        <taxon>Eukaryota</taxon>
        <taxon>Viridiplantae</taxon>
        <taxon>Streptophyta</taxon>
        <taxon>Embryophyta</taxon>
        <taxon>Tracheophyta</taxon>
        <taxon>Spermatophyta</taxon>
        <taxon>Magnoliopsida</taxon>
        <taxon>eudicotyledons</taxon>
        <taxon>Gunneridae</taxon>
        <taxon>Pentapetalae</taxon>
        <taxon>rosids</taxon>
        <taxon>malvids</taxon>
        <taxon>Brassicales</taxon>
        <taxon>Brassicaceae</taxon>
        <taxon>Camelineae</taxon>
        <taxon>Arabidopsis</taxon>
    </lineage>
</organism>
<reference key="1">
    <citation type="journal article" date="2000" name="Nature">
        <title>Sequence and analysis of chromosome 1 of the plant Arabidopsis thaliana.</title>
        <authorList>
            <person name="Theologis A."/>
            <person name="Ecker J.R."/>
            <person name="Palm C.J."/>
            <person name="Federspiel N.A."/>
            <person name="Kaul S."/>
            <person name="White O."/>
            <person name="Alonso J."/>
            <person name="Altafi H."/>
            <person name="Araujo R."/>
            <person name="Bowman C.L."/>
            <person name="Brooks S.Y."/>
            <person name="Buehler E."/>
            <person name="Chan A."/>
            <person name="Chao Q."/>
            <person name="Chen H."/>
            <person name="Cheuk R.F."/>
            <person name="Chin C.W."/>
            <person name="Chung M.K."/>
            <person name="Conn L."/>
            <person name="Conway A.B."/>
            <person name="Conway A.R."/>
            <person name="Creasy T.H."/>
            <person name="Dewar K."/>
            <person name="Dunn P."/>
            <person name="Etgu P."/>
            <person name="Feldblyum T.V."/>
            <person name="Feng J.-D."/>
            <person name="Fong B."/>
            <person name="Fujii C.Y."/>
            <person name="Gill J.E."/>
            <person name="Goldsmith A.D."/>
            <person name="Haas B."/>
            <person name="Hansen N.F."/>
            <person name="Hughes B."/>
            <person name="Huizar L."/>
            <person name="Hunter J.L."/>
            <person name="Jenkins J."/>
            <person name="Johnson-Hopson C."/>
            <person name="Khan S."/>
            <person name="Khaykin E."/>
            <person name="Kim C.J."/>
            <person name="Koo H.L."/>
            <person name="Kremenetskaia I."/>
            <person name="Kurtz D.B."/>
            <person name="Kwan A."/>
            <person name="Lam B."/>
            <person name="Langin-Hooper S."/>
            <person name="Lee A."/>
            <person name="Lee J.M."/>
            <person name="Lenz C.A."/>
            <person name="Li J.H."/>
            <person name="Li Y.-P."/>
            <person name="Lin X."/>
            <person name="Liu S.X."/>
            <person name="Liu Z.A."/>
            <person name="Luros J.S."/>
            <person name="Maiti R."/>
            <person name="Marziali A."/>
            <person name="Militscher J."/>
            <person name="Miranda M."/>
            <person name="Nguyen M."/>
            <person name="Nierman W.C."/>
            <person name="Osborne B.I."/>
            <person name="Pai G."/>
            <person name="Peterson J."/>
            <person name="Pham P.K."/>
            <person name="Rizzo M."/>
            <person name="Rooney T."/>
            <person name="Rowley D."/>
            <person name="Sakano H."/>
            <person name="Salzberg S.L."/>
            <person name="Schwartz J.R."/>
            <person name="Shinn P."/>
            <person name="Southwick A.M."/>
            <person name="Sun H."/>
            <person name="Tallon L.J."/>
            <person name="Tambunga G."/>
            <person name="Toriumi M.J."/>
            <person name="Town C.D."/>
            <person name="Utterback T."/>
            <person name="Van Aken S."/>
            <person name="Vaysberg M."/>
            <person name="Vysotskaia V.S."/>
            <person name="Walker M."/>
            <person name="Wu D."/>
            <person name="Yu G."/>
            <person name="Fraser C.M."/>
            <person name="Venter J.C."/>
            <person name="Davis R.W."/>
        </authorList>
    </citation>
    <scope>NUCLEOTIDE SEQUENCE [LARGE SCALE GENOMIC DNA]</scope>
    <source>
        <strain>cv. Columbia</strain>
    </source>
</reference>
<reference key="2">
    <citation type="journal article" date="2017" name="Plant J.">
        <title>Araport11: a complete reannotation of the Arabidopsis thaliana reference genome.</title>
        <authorList>
            <person name="Cheng C.Y."/>
            <person name="Krishnakumar V."/>
            <person name="Chan A.P."/>
            <person name="Thibaud-Nissen F."/>
            <person name="Schobel S."/>
            <person name="Town C.D."/>
        </authorList>
    </citation>
    <scope>GENOME REANNOTATION</scope>
    <source>
        <strain>cv. Columbia</strain>
    </source>
</reference>
<reference key="3">
    <citation type="journal article" date="2003" name="Science">
        <title>Empirical analysis of transcriptional activity in the Arabidopsis genome.</title>
        <authorList>
            <person name="Yamada K."/>
            <person name="Lim J."/>
            <person name="Dale J.M."/>
            <person name="Chen H."/>
            <person name="Shinn P."/>
            <person name="Palm C.J."/>
            <person name="Southwick A.M."/>
            <person name="Wu H.C."/>
            <person name="Kim C.J."/>
            <person name="Nguyen M."/>
            <person name="Pham P.K."/>
            <person name="Cheuk R.F."/>
            <person name="Karlin-Newmann G."/>
            <person name="Liu S.X."/>
            <person name="Lam B."/>
            <person name="Sakano H."/>
            <person name="Wu T."/>
            <person name="Yu G."/>
            <person name="Miranda M."/>
            <person name="Quach H.L."/>
            <person name="Tripp M."/>
            <person name="Chang C.H."/>
            <person name="Lee J.M."/>
            <person name="Toriumi M.J."/>
            <person name="Chan M.M."/>
            <person name="Tang C.C."/>
            <person name="Onodera C.S."/>
            <person name="Deng J.M."/>
            <person name="Akiyama K."/>
            <person name="Ansari Y."/>
            <person name="Arakawa T."/>
            <person name="Banh J."/>
            <person name="Banno F."/>
            <person name="Bowser L."/>
            <person name="Brooks S.Y."/>
            <person name="Carninci P."/>
            <person name="Chao Q."/>
            <person name="Choy N."/>
            <person name="Enju A."/>
            <person name="Goldsmith A.D."/>
            <person name="Gurjal M."/>
            <person name="Hansen N.F."/>
            <person name="Hayashizaki Y."/>
            <person name="Johnson-Hopson C."/>
            <person name="Hsuan V.W."/>
            <person name="Iida K."/>
            <person name="Karnes M."/>
            <person name="Khan S."/>
            <person name="Koesema E."/>
            <person name="Ishida J."/>
            <person name="Jiang P.X."/>
            <person name="Jones T."/>
            <person name="Kawai J."/>
            <person name="Kamiya A."/>
            <person name="Meyers C."/>
            <person name="Nakajima M."/>
            <person name="Narusaka M."/>
            <person name="Seki M."/>
            <person name="Sakurai T."/>
            <person name="Satou M."/>
            <person name="Tamse R."/>
            <person name="Vaysberg M."/>
            <person name="Wallender E.K."/>
            <person name="Wong C."/>
            <person name="Yamamura Y."/>
            <person name="Yuan S."/>
            <person name="Shinozaki K."/>
            <person name="Davis R.W."/>
            <person name="Theologis A."/>
            <person name="Ecker J.R."/>
        </authorList>
    </citation>
    <scope>NUCLEOTIDE SEQUENCE [LARGE SCALE MRNA] (ISOFORM 1)</scope>
    <source>
        <strain>cv. Columbia</strain>
    </source>
</reference>
<reference key="4">
    <citation type="journal article" date="2009" name="DNA Res.">
        <title>Analysis of multiple occurrences of alternative splicing events in Arabidopsis thaliana using novel sequenced full-length cDNAs.</title>
        <authorList>
            <person name="Iida K."/>
            <person name="Fukami-Kobayashi K."/>
            <person name="Toyoda A."/>
            <person name="Sakaki Y."/>
            <person name="Kobayashi M."/>
            <person name="Seki M."/>
            <person name="Shinozaki K."/>
        </authorList>
    </citation>
    <scope>NUCLEOTIDE SEQUENCE [LARGE SCALE MRNA] (ISOFORM 2)</scope>
    <source>
        <strain>cv. Columbia</strain>
    </source>
</reference>
<reference key="5">
    <citation type="journal article" date="2010" name="BMC Plant Biol.">
        <title>Characterization, sub-cellular localization and expression profiling of the isoprenylcysteine methylesterase gene family in Arabidopsis thaliana.</title>
        <authorList>
            <person name="Lan P."/>
            <person name="Li W."/>
            <person name="Wang H."/>
            <person name="Ma W."/>
        </authorList>
    </citation>
    <scope>SUBCELLULAR LOCATION</scope>
    <scope>TISSUE SPECIFICITY</scope>
    <scope>INDUCTION</scope>
</reference>
<gene>
    <name evidence="6" type="primary">ICMEL1</name>
    <name evidence="8" type="ordered locus">At1g26120</name>
    <name evidence="9" type="ORF">F14G11.9</name>
    <name evidence="10" type="ORF">F28B23.20</name>
</gene>
<comment type="function">
    <text evidence="1">Catalyzes the demethylation of isoprenylcysteine methylesters (By similarity). May be involved in the regulation of ABA signaling (By similarity).</text>
</comment>
<comment type="catalytic activity">
    <reaction evidence="1">
        <text>[protein]-C-terminal S-[(2E,6E)-farnesyl]-L-cysteine methyl ester + H2O = [protein]-C-terminal S-[(2E,6E)-farnesyl]-L-cysteine + methanol + H(+)</text>
        <dbReference type="Rhea" id="RHEA:48520"/>
        <dbReference type="Rhea" id="RHEA-COMP:12125"/>
        <dbReference type="Rhea" id="RHEA-COMP:12126"/>
        <dbReference type="ChEBI" id="CHEBI:15377"/>
        <dbReference type="ChEBI" id="CHEBI:15378"/>
        <dbReference type="ChEBI" id="CHEBI:17790"/>
        <dbReference type="ChEBI" id="CHEBI:90510"/>
        <dbReference type="ChEBI" id="CHEBI:90511"/>
        <dbReference type="EC" id="3.1.1.n2"/>
    </reaction>
</comment>
<comment type="subcellular location">
    <subcellularLocation>
        <location evidence="4">Endoplasmic reticulum membrane</location>
    </subcellularLocation>
    <subcellularLocation>
        <location evidence="4">Golgi apparatus membrane</location>
        <topology evidence="4">Multi-pass membrane protein</topology>
    </subcellularLocation>
</comment>
<comment type="alternative products">
    <event type="alternative splicing"/>
    <isoform>
        <id>Q8VYP9-1</id>
        <name>1</name>
        <sequence type="displayed"/>
    </isoform>
    <isoform>
        <id>Q8VYP9-2</id>
        <name>2</name>
        <sequence type="described" ref="VSP_041624"/>
    </isoform>
</comment>
<comment type="tissue specificity">
    <text evidence="4">Expressed in roots, rosette and cauline leaves, stems, flowers and siliques.</text>
</comment>
<comment type="induction">
    <text evidence="4">Down-regulated by heat treatment.</text>
</comment>
<comment type="similarity">
    <text evidence="7">Belongs to the AB hydrolase superfamily. Isoprenylcysteine methylesterase family.</text>
</comment>
<comment type="sequence caution" evidence="7">
    <conflict type="erroneous gene model prediction">
        <sequence resource="EMBL-CDS" id="AAG50528"/>
    </conflict>
</comment>
<comment type="sequence caution" evidence="7">
    <conflict type="erroneous gene model prediction">
        <sequence resource="EMBL-CDS" id="AAG50668"/>
    </conflict>
</comment>
<sequence length="476" mass="52719">MPSQILQISHHLPPKSSPSTEMMFKSLIYDDPSTTLLSRFGDDHHTISSTVKPLLSRSSSYNGTAMKTSSSSSAGGFTGWYQNRRRRSNSDNCLSAFSDDTNGTADGGNNSGDRQTTIGQEVGHAAAETFLLTRLCLKLLSYLGVGYRWITRFMALGCYAFLLMPGFIQVGYYYFFSPYVRRSIVYGDQPRNRLDLYLPKNSTGPKPVVAFVTGGAWIIGYKAWGSLLGQQLSERDIIVACIDYRNFPQGSISDMVKDASSGISFVCNHIAEYGGDPDRIYLMGQSAGAHIAACTIVEQVIKESGEGDSVSWSSSQINAYFGLSGGYNLLNLVDHFHSRGLYRSIFLSIMEGEESLRQFSPELVVQNPNLKHIIARLPPFILFHGTDDYSIPSDASKSFAETLQRLGAKAKVILYEGKTHTDLFLQDPMRGGIDEMFEDIVTVVLGDDQEAIGKSVDRRRLVPEFMLKLAHWVSPF</sequence>
<dbReference type="EC" id="3.1.1.n2" evidence="1"/>
<dbReference type="EMBL" id="AC079829">
    <property type="protein sequence ID" value="AAG50668.1"/>
    <property type="status" value="ALT_SEQ"/>
    <property type="molecule type" value="Genomic_DNA"/>
</dbReference>
<dbReference type="EMBL" id="AC084221">
    <property type="protein sequence ID" value="AAG50528.1"/>
    <property type="status" value="ALT_SEQ"/>
    <property type="molecule type" value="Genomic_DNA"/>
</dbReference>
<dbReference type="EMBL" id="CP002684">
    <property type="protein sequence ID" value="AEE30651.1"/>
    <property type="molecule type" value="Genomic_DNA"/>
</dbReference>
<dbReference type="EMBL" id="AY070374">
    <property type="protein sequence ID" value="AAL49871.1"/>
    <property type="molecule type" value="mRNA"/>
</dbReference>
<dbReference type="EMBL" id="AY091332">
    <property type="protein sequence ID" value="AAM14271.1"/>
    <property type="molecule type" value="mRNA"/>
</dbReference>
<dbReference type="EMBL" id="AK318861">
    <property type="protein sequence ID" value="BAH56976.1"/>
    <property type="molecule type" value="mRNA"/>
</dbReference>
<dbReference type="PIR" id="C86387">
    <property type="entry name" value="C86387"/>
</dbReference>
<dbReference type="RefSeq" id="NP_173937.2">
    <molecule id="Q8VYP9-1"/>
    <property type="nucleotide sequence ID" value="NM_102377.4"/>
</dbReference>
<dbReference type="SMR" id="Q8VYP9"/>
<dbReference type="FunCoup" id="Q8VYP9">
    <property type="interactions" value="820"/>
</dbReference>
<dbReference type="STRING" id="3702.Q8VYP9"/>
<dbReference type="ESTHER" id="arath-ICML1">
    <property type="family name" value="BD-FAE"/>
</dbReference>
<dbReference type="MEROPS" id="S09.A21"/>
<dbReference type="iPTMnet" id="Q8VYP9"/>
<dbReference type="PaxDb" id="3702-AT1G26120.1"/>
<dbReference type="ProteomicsDB" id="228762">
    <molecule id="Q8VYP9-1"/>
</dbReference>
<dbReference type="EnsemblPlants" id="AT1G26120.1">
    <molecule id="Q8VYP9-1"/>
    <property type="protein sequence ID" value="AT1G26120.1"/>
    <property type="gene ID" value="AT1G26120"/>
</dbReference>
<dbReference type="GeneID" id="839153"/>
<dbReference type="Gramene" id="AT1G26120.1">
    <molecule id="Q8VYP9-1"/>
    <property type="protein sequence ID" value="AT1G26120.1"/>
    <property type="gene ID" value="AT1G26120"/>
</dbReference>
<dbReference type="KEGG" id="ath:AT1G26120"/>
<dbReference type="Araport" id="AT1G26120"/>
<dbReference type="TAIR" id="AT1G26120">
    <property type="gene designation" value="ICME-LIKE1"/>
</dbReference>
<dbReference type="eggNOG" id="KOG1516">
    <property type="taxonomic scope" value="Eukaryota"/>
</dbReference>
<dbReference type="HOGENOM" id="CLU_012494_2_4_1"/>
<dbReference type="InParanoid" id="Q8VYP9"/>
<dbReference type="OMA" id="MMFKPLI"/>
<dbReference type="OrthoDB" id="6495301at2759"/>
<dbReference type="PhylomeDB" id="Q8VYP9"/>
<dbReference type="PRO" id="PR:Q8VYP9"/>
<dbReference type="Proteomes" id="UP000006548">
    <property type="component" value="Chromosome 1"/>
</dbReference>
<dbReference type="ExpressionAtlas" id="Q8VYP9">
    <property type="expression patterns" value="baseline and differential"/>
</dbReference>
<dbReference type="GO" id="GO:0005789">
    <property type="term" value="C:endoplasmic reticulum membrane"/>
    <property type="evidence" value="ECO:0000314"/>
    <property type="project" value="UniProtKB"/>
</dbReference>
<dbReference type="GO" id="GO:0000139">
    <property type="term" value="C:Golgi membrane"/>
    <property type="evidence" value="ECO:0000314"/>
    <property type="project" value="UniProtKB"/>
</dbReference>
<dbReference type="GO" id="GO:0010296">
    <property type="term" value="F:prenylcysteine methylesterase activity"/>
    <property type="evidence" value="ECO:0007669"/>
    <property type="project" value="RHEA"/>
</dbReference>
<dbReference type="FunFam" id="3.40.50.1820:FF:000084">
    <property type="entry name" value="Isoprenylcysteine alpha-carbonyl methylesterase ICME"/>
    <property type="match status" value="1"/>
</dbReference>
<dbReference type="Gene3D" id="3.40.50.1820">
    <property type="entry name" value="alpha/beta hydrolase"/>
    <property type="match status" value="1"/>
</dbReference>
<dbReference type="InterPro" id="IPR029058">
    <property type="entry name" value="AB_hydrolase_fold"/>
</dbReference>
<dbReference type="InterPro" id="IPR049492">
    <property type="entry name" value="BD-FAE-like_dom"/>
</dbReference>
<dbReference type="InterPro" id="IPR050300">
    <property type="entry name" value="GDXG_lipolytic_enzyme"/>
</dbReference>
<dbReference type="PANTHER" id="PTHR48081">
    <property type="entry name" value="AB HYDROLASE SUPERFAMILY PROTEIN C4A8.06C"/>
    <property type="match status" value="1"/>
</dbReference>
<dbReference type="PANTHER" id="PTHR48081:SF33">
    <property type="entry name" value="KYNURENINE FORMAMIDASE"/>
    <property type="match status" value="1"/>
</dbReference>
<dbReference type="Pfam" id="PF20434">
    <property type="entry name" value="BD-FAE"/>
    <property type="match status" value="1"/>
</dbReference>
<dbReference type="SUPFAM" id="SSF53474">
    <property type="entry name" value="alpha/beta-Hydrolases"/>
    <property type="match status" value="1"/>
</dbReference>
<protein>
    <recommendedName>
        <fullName evidence="6">Probable isoprenylcysteine alpha-carbonyl methylesterase ICMEL1</fullName>
        <ecNumber evidence="1">3.1.1.n2</ecNumber>
    </recommendedName>
    <alternativeName>
        <fullName evidence="6">Isoprenylcysteine methylesterase-like protein 1</fullName>
    </alternativeName>
</protein>
<evidence type="ECO:0000250" key="1">
    <source>
        <dbReference type="UniProtKB" id="Q94AS5"/>
    </source>
</evidence>
<evidence type="ECO:0000255" key="2"/>
<evidence type="ECO:0000256" key="3">
    <source>
        <dbReference type="SAM" id="MobiDB-lite"/>
    </source>
</evidence>
<evidence type="ECO:0000269" key="4">
    <source>
    </source>
</evidence>
<evidence type="ECO:0000303" key="5">
    <source>
    </source>
</evidence>
<evidence type="ECO:0000303" key="6">
    <source>
    </source>
</evidence>
<evidence type="ECO:0000305" key="7"/>
<evidence type="ECO:0000312" key="8">
    <source>
        <dbReference type="Araport" id="AT1G26120"/>
    </source>
</evidence>
<evidence type="ECO:0000312" key="9">
    <source>
        <dbReference type="EMBL" id="AAG50528.1"/>
    </source>
</evidence>
<evidence type="ECO:0000312" key="10">
    <source>
        <dbReference type="EMBL" id="AAG50668.1"/>
    </source>
</evidence>
<name>ICML1_ARATH</name>
<accession>Q8VYP9</accession>
<accession>C0Z2P7</accession>
<accession>Q9C556</accession>
<proteinExistence type="evidence at transcript level"/>